<comment type="function">
    <text evidence="1">DNA polymerase III is a complex, multichain enzyme responsible for most of the replicative synthesis in bacteria. This DNA polymerase also exhibits 3' to 5' exonuclease activity. The alpha chain is the DNA polymerase (By similarity).</text>
</comment>
<comment type="catalytic activity">
    <reaction>
        <text>DNA(n) + a 2'-deoxyribonucleoside 5'-triphosphate = DNA(n+1) + diphosphate</text>
        <dbReference type="Rhea" id="RHEA:22508"/>
        <dbReference type="Rhea" id="RHEA-COMP:17339"/>
        <dbReference type="Rhea" id="RHEA-COMP:17340"/>
        <dbReference type="ChEBI" id="CHEBI:33019"/>
        <dbReference type="ChEBI" id="CHEBI:61560"/>
        <dbReference type="ChEBI" id="CHEBI:173112"/>
        <dbReference type="EC" id="2.7.7.7"/>
    </reaction>
</comment>
<comment type="subunit">
    <text evidence="1">DNA polymerase III contains a core (composed of alpha, epsilon and theta chains) that associates with a tau subunit. This core dimerizes to form the PolIII' complex. PolIII' associates with the gamma complex (composed of gamma, delta, delta', psi and chi chains) and with the beta chain to form the complete DNA polymerase III complex (By similarity).</text>
</comment>
<comment type="subcellular location">
    <subcellularLocation>
        <location evidence="1">Cytoplasm</location>
    </subcellularLocation>
</comment>
<comment type="similarity">
    <text evidence="2">Belongs to the DNA polymerase type-C family. DnaE subfamily.</text>
</comment>
<evidence type="ECO:0000250" key="1"/>
<evidence type="ECO:0000305" key="2"/>
<proteinExistence type="inferred from homology"/>
<reference key="1">
    <citation type="journal article" date="2000" name="Nature">
        <title>Complete genome sequence of Pseudomonas aeruginosa PAO1, an opportunistic pathogen.</title>
        <authorList>
            <person name="Stover C.K."/>
            <person name="Pham X.-Q.T."/>
            <person name="Erwin A.L."/>
            <person name="Mizoguchi S.D."/>
            <person name="Warrener P."/>
            <person name="Hickey M.J."/>
            <person name="Brinkman F.S.L."/>
            <person name="Hufnagle W.O."/>
            <person name="Kowalik D.J."/>
            <person name="Lagrou M."/>
            <person name="Garber R.L."/>
            <person name="Goltry L."/>
            <person name="Tolentino E."/>
            <person name="Westbrock-Wadman S."/>
            <person name="Yuan Y."/>
            <person name="Brody L.L."/>
            <person name="Coulter S.N."/>
            <person name="Folger K.R."/>
            <person name="Kas A."/>
            <person name="Larbig K."/>
            <person name="Lim R.M."/>
            <person name="Smith K.A."/>
            <person name="Spencer D.H."/>
            <person name="Wong G.K.-S."/>
            <person name="Wu Z."/>
            <person name="Paulsen I.T."/>
            <person name="Reizer J."/>
            <person name="Saier M.H. Jr."/>
            <person name="Hancock R.E.W."/>
            <person name="Lory S."/>
            <person name="Olson M.V."/>
        </authorList>
    </citation>
    <scope>NUCLEOTIDE SEQUENCE [LARGE SCALE GENOMIC DNA]</scope>
    <source>
        <strain>ATCC 15692 / DSM 22644 / CIP 104116 / JCM 14847 / LMG 12228 / 1C / PRS 101 / PAO1</strain>
    </source>
</reference>
<reference key="2">
    <citation type="submission" date="2001-05" db="EMBL/GenBank/DDBJ databases">
        <title>Naturally-ocurring dnaE Pseudomonas aeruginosa mutations.</title>
        <authorList>
            <person name="Oliver A."/>
            <person name="Baquero F."/>
            <person name="Blazquez J."/>
        </authorList>
    </citation>
    <scope>NUCLEOTIDE SEQUENCE [GENOMIC DNA]</scope>
</reference>
<protein>
    <recommendedName>
        <fullName>DNA polymerase III subunit alpha</fullName>
        <ecNumber>2.7.7.7</ecNumber>
    </recommendedName>
</protein>
<dbReference type="EC" id="2.7.7.7"/>
<dbReference type="EMBL" id="AE004091">
    <property type="protein sequence ID" value="AAG07028.1"/>
    <property type="molecule type" value="Genomic_DNA"/>
</dbReference>
<dbReference type="EMBL" id="AF297647">
    <property type="protein sequence ID" value="AAG16710.2"/>
    <property type="molecule type" value="Genomic_DNA"/>
</dbReference>
<dbReference type="PIR" id="H83189">
    <property type="entry name" value="H83189"/>
</dbReference>
<dbReference type="RefSeq" id="NP_252330.1">
    <property type="nucleotide sequence ID" value="NC_002516.2"/>
</dbReference>
<dbReference type="RefSeq" id="WP_003098578.1">
    <property type="nucleotide sequence ID" value="NZ_QZGE01000001.1"/>
</dbReference>
<dbReference type="SMR" id="Q9HXZ1"/>
<dbReference type="FunCoup" id="Q9HXZ1">
    <property type="interactions" value="472"/>
</dbReference>
<dbReference type="STRING" id="208964.PA3640"/>
<dbReference type="PaxDb" id="208964-PA3640"/>
<dbReference type="GeneID" id="880490"/>
<dbReference type="KEGG" id="pae:PA3640"/>
<dbReference type="PATRIC" id="fig|208964.12.peg.3809"/>
<dbReference type="PseudoCAP" id="PA3640"/>
<dbReference type="HOGENOM" id="CLU_001600_0_0_6"/>
<dbReference type="InParanoid" id="Q9HXZ1"/>
<dbReference type="OrthoDB" id="9803237at2"/>
<dbReference type="PhylomeDB" id="Q9HXZ1"/>
<dbReference type="BioCyc" id="PAER208964:G1FZ6-3710-MONOMER"/>
<dbReference type="Proteomes" id="UP000002438">
    <property type="component" value="Chromosome"/>
</dbReference>
<dbReference type="GO" id="GO:0005737">
    <property type="term" value="C:cytoplasm"/>
    <property type="evidence" value="ECO:0007669"/>
    <property type="project" value="UniProtKB-SubCell"/>
</dbReference>
<dbReference type="GO" id="GO:0008408">
    <property type="term" value="F:3'-5' exonuclease activity"/>
    <property type="evidence" value="ECO:0007669"/>
    <property type="project" value="InterPro"/>
</dbReference>
<dbReference type="GO" id="GO:0003887">
    <property type="term" value="F:DNA-directed DNA polymerase activity"/>
    <property type="evidence" value="ECO:0000318"/>
    <property type="project" value="GO_Central"/>
</dbReference>
<dbReference type="GO" id="GO:0003676">
    <property type="term" value="F:nucleic acid binding"/>
    <property type="evidence" value="ECO:0007669"/>
    <property type="project" value="InterPro"/>
</dbReference>
<dbReference type="GO" id="GO:0006260">
    <property type="term" value="P:DNA replication"/>
    <property type="evidence" value="ECO:0007669"/>
    <property type="project" value="UniProtKB-KW"/>
</dbReference>
<dbReference type="CDD" id="cd04485">
    <property type="entry name" value="DnaE_OBF"/>
    <property type="match status" value="1"/>
</dbReference>
<dbReference type="CDD" id="cd07433">
    <property type="entry name" value="PHP_PolIIIA_DnaE1"/>
    <property type="match status" value="1"/>
</dbReference>
<dbReference type="FunFam" id="1.10.10.1600:FF:000001">
    <property type="entry name" value="DNA polymerase III subunit alpha"/>
    <property type="match status" value="1"/>
</dbReference>
<dbReference type="FunFam" id="1.10.150.870:FF:000001">
    <property type="entry name" value="DNA polymerase III subunit alpha"/>
    <property type="match status" value="1"/>
</dbReference>
<dbReference type="FunFam" id="2.40.50.140:FF:000106">
    <property type="entry name" value="DNA polymerase III subunit alpha"/>
    <property type="match status" value="1"/>
</dbReference>
<dbReference type="FunFam" id="3.20.20.140:FF:000028">
    <property type="entry name" value="DNA polymerase III subunit alpha"/>
    <property type="match status" value="1"/>
</dbReference>
<dbReference type="Gene3D" id="1.10.150.870">
    <property type="match status" value="1"/>
</dbReference>
<dbReference type="Gene3D" id="1.10.10.1600">
    <property type="entry name" value="Bacterial DNA polymerase III alpha subunit, thumb domain"/>
    <property type="match status" value="1"/>
</dbReference>
<dbReference type="Gene3D" id="3.20.20.140">
    <property type="entry name" value="Metal-dependent hydrolases"/>
    <property type="match status" value="1"/>
</dbReference>
<dbReference type="Gene3D" id="2.40.50.140">
    <property type="entry name" value="Nucleic acid-binding proteins"/>
    <property type="match status" value="1"/>
</dbReference>
<dbReference type="InterPro" id="IPR011708">
    <property type="entry name" value="DNA_pol3_alpha_NTPase_dom"/>
</dbReference>
<dbReference type="InterPro" id="IPR041931">
    <property type="entry name" value="DNA_pol3_alpha_thumb_dom"/>
</dbReference>
<dbReference type="InterPro" id="IPR040982">
    <property type="entry name" value="DNA_pol3_finger"/>
</dbReference>
<dbReference type="InterPro" id="IPR048472">
    <property type="entry name" value="DNA_pol_IIIA_C"/>
</dbReference>
<dbReference type="InterPro" id="IPR004805">
    <property type="entry name" value="DnaE2/DnaE/PolC"/>
</dbReference>
<dbReference type="InterPro" id="IPR029460">
    <property type="entry name" value="DNAPol_HHH"/>
</dbReference>
<dbReference type="InterPro" id="IPR012340">
    <property type="entry name" value="NA-bd_OB-fold"/>
</dbReference>
<dbReference type="InterPro" id="IPR004365">
    <property type="entry name" value="NA-bd_OB_tRNA"/>
</dbReference>
<dbReference type="InterPro" id="IPR004013">
    <property type="entry name" value="PHP_dom"/>
</dbReference>
<dbReference type="InterPro" id="IPR003141">
    <property type="entry name" value="Pol/His_phosphatase_N"/>
</dbReference>
<dbReference type="InterPro" id="IPR016195">
    <property type="entry name" value="Pol/histidinol_Pase-like"/>
</dbReference>
<dbReference type="InterPro" id="IPR049821">
    <property type="entry name" value="PolIIIA_DnaE1_PHP"/>
</dbReference>
<dbReference type="NCBIfam" id="TIGR00594">
    <property type="entry name" value="polc"/>
    <property type="match status" value="1"/>
</dbReference>
<dbReference type="NCBIfam" id="NF004226">
    <property type="entry name" value="PRK05673.1"/>
    <property type="match status" value="1"/>
</dbReference>
<dbReference type="PANTHER" id="PTHR32294">
    <property type="entry name" value="DNA POLYMERASE III SUBUNIT ALPHA"/>
    <property type="match status" value="1"/>
</dbReference>
<dbReference type="PANTHER" id="PTHR32294:SF0">
    <property type="entry name" value="DNA POLYMERASE III SUBUNIT ALPHA"/>
    <property type="match status" value="1"/>
</dbReference>
<dbReference type="Pfam" id="PF07733">
    <property type="entry name" value="DNA_pol3_alpha"/>
    <property type="match status" value="1"/>
</dbReference>
<dbReference type="Pfam" id="PF17657">
    <property type="entry name" value="DNA_pol3_finger"/>
    <property type="match status" value="1"/>
</dbReference>
<dbReference type="Pfam" id="PF20914">
    <property type="entry name" value="DNA_pol_IIIA_C"/>
    <property type="match status" value="1"/>
</dbReference>
<dbReference type="Pfam" id="PF14579">
    <property type="entry name" value="HHH_6"/>
    <property type="match status" value="1"/>
</dbReference>
<dbReference type="Pfam" id="PF02811">
    <property type="entry name" value="PHP"/>
    <property type="match status" value="1"/>
</dbReference>
<dbReference type="Pfam" id="PF01336">
    <property type="entry name" value="tRNA_anti-codon"/>
    <property type="match status" value="1"/>
</dbReference>
<dbReference type="SMART" id="SM00481">
    <property type="entry name" value="POLIIIAc"/>
    <property type="match status" value="1"/>
</dbReference>
<dbReference type="SUPFAM" id="SSF89550">
    <property type="entry name" value="PHP domain-like"/>
    <property type="match status" value="1"/>
</dbReference>
<sequence length="1173" mass="130905">MTVSFVHLRLHTEFSLVDGLVRVKPLAKAVAGLGMPAVAVTDQSNMCSLVKFYKTAMGAGIKPICGADIWLASREEDGPLSRLSLLAMNAKGYRNLTELISRGWSEGQRNGEIIIERDWVKEAAEGLIALSAAKEGEIGHALLDGEEAKAEALLREWMEVFPERFYVEVQRTSRVNDEEHLHAAVALASRCNAPLVATNDVRFIKQEDFEAHETRVCIGEGRTLDDPRRPRTYSDQQYLKSPAEMAELFSDLPEALENTVEIAKRCNIEVQLGKYFLPDFPTPNGMGIDDYLRHASFEGLEERLEVLLPKDTPDYEAKRQVYVDRLNFELDIIIQMGFPGYFLIVMDFIKWAKNNGVPVGPGRGSGAGSLVAYVLKITDLDPLAYDLLFERFLNPERISMPDFDVDFCMEGRDRVIDYVADAYGRNAVSQIITFGTMAAKAVVRDVARVQGKSYGLADRLSKMIPFEVGMTLDKAYEQEEMLRDFLKSDEEAAEIWEMALKLEGITRGTGKHAGGVVIAPTKLTDFSPIACDEEGGGLVTQFDKDDVEAAGLVKFDFLGLRTLTIIKWAMEIINREQAKKGLEPVNIDFIPLDDKPTYSLLQKAETTAVFQLESRGMKELIKKLKPDCLEDLIALVALFRPGPLQSGMVDDFINRKHGRAELSYPHPDYQYAGLEPVLKPTYGIILYQEQVMQIAQVMAGYTLGGADMLRRAMGKKKPEEMAKQRGGFIEGCKNNGIDADLAGNIFDLVEKFAGYGFNKSHSAAYGLVSYQTAWLKTHFPAPFMAAVLTADMQNTDKVVTLIEECRHMKLRIVAPDVNNSEFRFTVDDDGRIVYGLGAIKGVGEGPVEAITECRAEGGPFNTLFDFCDRVDLKRINKRTLEALIRAGALDRLGPHYHDELKAYQATVDLNRAVLLAAMEEAIQAAEQTARSHDSGHMDLFGGVFAEPEADVYANHRKVKELTLKERLKGEKDTLGLYLTGHPIDEYEGEVRRFARQRIVELKPARDTQTVAGLIVNLRVMKNKKGDKMGFVTLDDRSGRIEASLFSEAFAAAQSLLQTDALVVVEGEVSQDDFSGGLRLRAKRVMSLEEARTGLAESLRMKLHADLLKGDRLRWLGELFNRHRGSCPITLDYTSADAKALLQFGESWRVDPADDLIQALRDQFGRDNVFLNYR</sequence>
<organism>
    <name type="scientific">Pseudomonas aeruginosa (strain ATCC 15692 / DSM 22644 / CIP 104116 / JCM 14847 / LMG 12228 / 1C / PRS 101 / PAO1)</name>
    <dbReference type="NCBI Taxonomy" id="208964"/>
    <lineage>
        <taxon>Bacteria</taxon>
        <taxon>Pseudomonadati</taxon>
        <taxon>Pseudomonadota</taxon>
        <taxon>Gammaproteobacteria</taxon>
        <taxon>Pseudomonadales</taxon>
        <taxon>Pseudomonadaceae</taxon>
        <taxon>Pseudomonas</taxon>
    </lineage>
</organism>
<feature type="chain" id="PRO_0000103334" description="DNA polymerase III subunit alpha">
    <location>
        <begin position="1"/>
        <end position="1173"/>
    </location>
</feature>
<gene>
    <name type="primary">dnaE</name>
    <name type="ordered locus">PA3640</name>
</gene>
<accession>Q9HXZ1</accession>
<accession>Q9F662</accession>
<name>DPO3A_PSEAE</name>
<keyword id="KW-0963">Cytoplasm</keyword>
<keyword id="KW-0235">DNA replication</keyword>
<keyword id="KW-0239">DNA-directed DNA polymerase</keyword>
<keyword id="KW-0548">Nucleotidyltransferase</keyword>
<keyword id="KW-1185">Reference proteome</keyword>
<keyword id="KW-0808">Transferase</keyword>